<dbReference type="EMBL" id="AF184215">
    <property type="protein sequence ID" value="AAK13251.1"/>
    <property type="molecule type" value="Genomic_DNA"/>
</dbReference>
<dbReference type="EMBL" id="AL392043">
    <property type="status" value="NOT_ANNOTATED_CDS"/>
    <property type="molecule type" value="Genomic_DNA"/>
</dbReference>
<dbReference type="EMBL" id="CH471211">
    <property type="protein sequence ID" value="EAW61308.1"/>
    <property type="molecule type" value="Genomic_DNA"/>
</dbReference>
<dbReference type="EMBL" id="BC101635">
    <property type="protein sequence ID" value="AAI01636.1"/>
    <property type="molecule type" value="mRNA"/>
</dbReference>
<dbReference type="EMBL" id="BC104823">
    <property type="protein sequence ID" value="AAI04824.1"/>
    <property type="molecule type" value="mRNA"/>
</dbReference>
<dbReference type="CCDS" id="CCDS7670.1"/>
<dbReference type="RefSeq" id="NP_796374.2">
    <property type="nucleotide sequence ID" value="NM_177400.3"/>
</dbReference>
<dbReference type="RefSeq" id="XP_016872278.1">
    <property type="nucleotide sequence ID" value="XM_017016789.1"/>
</dbReference>
<dbReference type="SMR" id="Q9C056"/>
<dbReference type="BioGRID" id="124105">
    <property type="interactions" value="1"/>
</dbReference>
<dbReference type="FunCoup" id="Q9C056">
    <property type="interactions" value="715"/>
</dbReference>
<dbReference type="IntAct" id="Q9C056">
    <property type="interactions" value="1"/>
</dbReference>
<dbReference type="STRING" id="9606.ENSP00000357581"/>
<dbReference type="iPTMnet" id="Q9C056"/>
<dbReference type="PhosphoSitePlus" id="Q9C056"/>
<dbReference type="BioMuta" id="NKX6-2"/>
<dbReference type="DMDM" id="158564033"/>
<dbReference type="MassIVE" id="Q9C056"/>
<dbReference type="PaxDb" id="9606-ENSP00000357581"/>
<dbReference type="PeptideAtlas" id="Q9C056"/>
<dbReference type="Antibodypedia" id="56219">
    <property type="antibodies" value="74 antibodies from 16 providers"/>
</dbReference>
<dbReference type="DNASU" id="84504"/>
<dbReference type="Ensembl" id="ENST00000368592.8">
    <property type="protein sequence ID" value="ENSP00000357581.5"/>
    <property type="gene ID" value="ENSG00000148826.9"/>
</dbReference>
<dbReference type="GeneID" id="84504"/>
<dbReference type="KEGG" id="hsa:84504"/>
<dbReference type="MANE-Select" id="ENST00000368592.8">
    <property type="protein sequence ID" value="ENSP00000357581.5"/>
    <property type="RefSeq nucleotide sequence ID" value="NM_177400.3"/>
    <property type="RefSeq protein sequence ID" value="NP_796374.2"/>
</dbReference>
<dbReference type="UCSC" id="uc001llr.3">
    <property type="organism name" value="human"/>
</dbReference>
<dbReference type="AGR" id="HGNC:19321"/>
<dbReference type="CTD" id="84504"/>
<dbReference type="DisGeNET" id="84504"/>
<dbReference type="GeneCards" id="NKX6-2"/>
<dbReference type="GeneReviews" id="NKX6-2"/>
<dbReference type="HGNC" id="HGNC:19321">
    <property type="gene designation" value="NKX6-2"/>
</dbReference>
<dbReference type="HPA" id="ENSG00000148826">
    <property type="expression patterns" value="Tissue enriched (brain)"/>
</dbReference>
<dbReference type="MalaCards" id="NKX6-2"/>
<dbReference type="MIM" id="605955">
    <property type="type" value="gene"/>
</dbReference>
<dbReference type="MIM" id="617560">
    <property type="type" value="phenotype"/>
</dbReference>
<dbReference type="neXtProt" id="NX_Q9C056"/>
<dbReference type="OpenTargets" id="ENSG00000148826"/>
<dbReference type="Orphanet" id="527497">
    <property type="disease" value="NKX6-2-related autosomal recessive hypomyelinating leukodystrophy"/>
</dbReference>
<dbReference type="PharmGKB" id="PA134896334"/>
<dbReference type="VEuPathDB" id="HostDB:ENSG00000148826"/>
<dbReference type="eggNOG" id="KOG0847">
    <property type="taxonomic scope" value="Eukaryota"/>
</dbReference>
<dbReference type="GeneTree" id="ENSGT00940000161547"/>
<dbReference type="HOGENOM" id="CLU_064820_1_1_1"/>
<dbReference type="InParanoid" id="Q9C056"/>
<dbReference type="OMA" id="MQGAPWR"/>
<dbReference type="OrthoDB" id="6159439at2759"/>
<dbReference type="PAN-GO" id="Q9C056">
    <property type="GO annotations" value="5 GO annotations based on evolutionary models"/>
</dbReference>
<dbReference type="PhylomeDB" id="Q9C056"/>
<dbReference type="TreeFam" id="TF327063"/>
<dbReference type="PathwayCommons" id="Q9C056"/>
<dbReference type="BioGRID-ORCS" id="84504">
    <property type="hits" value="11 hits in 1150 CRISPR screens"/>
</dbReference>
<dbReference type="ChiTaRS" id="NKX6-2">
    <property type="organism name" value="human"/>
</dbReference>
<dbReference type="GeneWiki" id="NKX6-2"/>
<dbReference type="GenomeRNAi" id="84504"/>
<dbReference type="Pharos" id="Q9C056">
    <property type="development level" value="Tbio"/>
</dbReference>
<dbReference type="PRO" id="PR:Q9C056"/>
<dbReference type="Proteomes" id="UP000005640">
    <property type="component" value="Chromosome 10"/>
</dbReference>
<dbReference type="RNAct" id="Q9C056">
    <property type="molecule type" value="protein"/>
</dbReference>
<dbReference type="Bgee" id="ENSG00000148826">
    <property type="expression patterns" value="Expressed in C1 segment of cervical spinal cord and 73 other cell types or tissues"/>
</dbReference>
<dbReference type="GO" id="GO:0000785">
    <property type="term" value="C:chromatin"/>
    <property type="evidence" value="ECO:0000247"/>
    <property type="project" value="NTNU_SB"/>
</dbReference>
<dbReference type="GO" id="GO:0005634">
    <property type="term" value="C:nucleus"/>
    <property type="evidence" value="ECO:0000318"/>
    <property type="project" value="GO_Central"/>
</dbReference>
<dbReference type="GO" id="GO:0003677">
    <property type="term" value="F:DNA binding"/>
    <property type="evidence" value="ECO:0000250"/>
    <property type="project" value="UniProtKB"/>
</dbReference>
<dbReference type="GO" id="GO:0003700">
    <property type="term" value="F:DNA-binding transcription factor activity"/>
    <property type="evidence" value="ECO:0000303"/>
    <property type="project" value="UniProtKB"/>
</dbReference>
<dbReference type="GO" id="GO:0000981">
    <property type="term" value="F:DNA-binding transcription factor activity, RNA polymerase II-specific"/>
    <property type="evidence" value="ECO:0000247"/>
    <property type="project" value="NTNU_SB"/>
</dbReference>
<dbReference type="GO" id="GO:0001227">
    <property type="term" value="F:DNA-binding transcription repressor activity, RNA polymerase II-specific"/>
    <property type="evidence" value="ECO:0007669"/>
    <property type="project" value="Ensembl"/>
</dbReference>
<dbReference type="GO" id="GO:0000978">
    <property type="term" value="F:RNA polymerase II cis-regulatory region sequence-specific DNA binding"/>
    <property type="evidence" value="ECO:0000318"/>
    <property type="project" value="GO_Central"/>
</dbReference>
<dbReference type="GO" id="GO:1990837">
    <property type="term" value="F:sequence-specific double-stranded DNA binding"/>
    <property type="evidence" value="ECO:0000314"/>
    <property type="project" value="ARUK-UCL"/>
</dbReference>
<dbReference type="GO" id="GO:0030154">
    <property type="term" value="P:cell differentiation"/>
    <property type="evidence" value="ECO:0000318"/>
    <property type="project" value="GO_Central"/>
</dbReference>
<dbReference type="GO" id="GO:0022010">
    <property type="term" value="P:central nervous system myelination"/>
    <property type="evidence" value="ECO:0007669"/>
    <property type="project" value="Ensembl"/>
</dbReference>
<dbReference type="GO" id="GO:0010454">
    <property type="term" value="P:negative regulation of cell fate commitment"/>
    <property type="evidence" value="ECO:0007669"/>
    <property type="project" value="Ensembl"/>
</dbReference>
<dbReference type="GO" id="GO:0045892">
    <property type="term" value="P:negative regulation of DNA-templated transcription"/>
    <property type="evidence" value="ECO:0000250"/>
    <property type="project" value="UniProtKB"/>
</dbReference>
<dbReference type="GO" id="GO:0048715">
    <property type="term" value="P:negative regulation of oligodendrocyte differentiation"/>
    <property type="evidence" value="ECO:0007669"/>
    <property type="project" value="Ensembl"/>
</dbReference>
<dbReference type="GO" id="GO:0050885">
    <property type="term" value="P:neuromuscular process controlling balance"/>
    <property type="evidence" value="ECO:0007669"/>
    <property type="project" value="Ensembl"/>
</dbReference>
<dbReference type="GO" id="GO:0048663">
    <property type="term" value="P:neuron fate commitment"/>
    <property type="evidence" value="ECO:0007669"/>
    <property type="project" value="Ensembl"/>
</dbReference>
<dbReference type="GO" id="GO:0003310">
    <property type="term" value="P:pancreatic A cell differentiation"/>
    <property type="evidence" value="ECO:0007669"/>
    <property type="project" value="Ensembl"/>
</dbReference>
<dbReference type="GO" id="GO:0010455">
    <property type="term" value="P:positive regulation of cell fate commitment"/>
    <property type="evidence" value="ECO:0007669"/>
    <property type="project" value="Ensembl"/>
</dbReference>
<dbReference type="GO" id="GO:0048714">
    <property type="term" value="P:positive regulation of oligodendrocyte differentiation"/>
    <property type="evidence" value="ECO:0007669"/>
    <property type="project" value="Ensembl"/>
</dbReference>
<dbReference type="GO" id="GO:0006355">
    <property type="term" value="P:regulation of DNA-templated transcription"/>
    <property type="evidence" value="ECO:0000303"/>
    <property type="project" value="UniProtKB"/>
</dbReference>
<dbReference type="GO" id="GO:0031641">
    <property type="term" value="P:regulation of myelination"/>
    <property type="evidence" value="ECO:0000250"/>
    <property type="project" value="UniProtKB"/>
</dbReference>
<dbReference type="GO" id="GO:0006357">
    <property type="term" value="P:regulation of transcription by RNA polymerase II"/>
    <property type="evidence" value="ECO:0000318"/>
    <property type="project" value="GO_Central"/>
</dbReference>
<dbReference type="CDD" id="cd00086">
    <property type="entry name" value="homeodomain"/>
    <property type="match status" value="1"/>
</dbReference>
<dbReference type="FunFam" id="1.10.10.60:FF:000067">
    <property type="entry name" value="NK6 homeobox 1"/>
    <property type="match status" value="1"/>
</dbReference>
<dbReference type="Gene3D" id="1.10.10.60">
    <property type="entry name" value="Homeodomain-like"/>
    <property type="match status" value="1"/>
</dbReference>
<dbReference type="InterPro" id="IPR001356">
    <property type="entry name" value="HD"/>
</dbReference>
<dbReference type="InterPro" id="IPR020479">
    <property type="entry name" value="HD_metazoa"/>
</dbReference>
<dbReference type="InterPro" id="IPR017970">
    <property type="entry name" value="Homeobox_CS"/>
</dbReference>
<dbReference type="InterPro" id="IPR050394">
    <property type="entry name" value="Homeobox_NK-like"/>
</dbReference>
<dbReference type="InterPro" id="IPR009057">
    <property type="entry name" value="Homeodomain-like_sf"/>
</dbReference>
<dbReference type="InterPro" id="IPR000047">
    <property type="entry name" value="HTH_motif"/>
</dbReference>
<dbReference type="PANTHER" id="PTHR24340">
    <property type="entry name" value="HOMEOBOX PROTEIN NKX"/>
    <property type="match status" value="1"/>
</dbReference>
<dbReference type="PANTHER" id="PTHR24340:SF21">
    <property type="entry name" value="HOMEOBOX PROTEIN NKX-6.2"/>
    <property type="match status" value="1"/>
</dbReference>
<dbReference type="Pfam" id="PF00046">
    <property type="entry name" value="Homeodomain"/>
    <property type="match status" value="1"/>
</dbReference>
<dbReference type="PRINTS" id="PR00024">
    <property type="entry name" value="HOMEOBOX"/>
</dbReference>
<dbReference type="PRINTS" id="PR00031">
    <property type="entry name" value="HTHREPRESSR"/>
</dbReference>
<dbReference type="SMART" id="SM00389">
    <property type="entry name" value="HOX"/>
    <property type="match status" value="1"/>
</dbReference>
<dbReference type="SUPFAM" id="SSF46689">
    <property type="entry name" value="Homeodomain-like"/>
    <property type="match status" value="1"/>
</dbReference>
<dbReference type="PROSITE" id="PS00027">
    <property type="entry name" value="HOMEOBOX_1"/>
    <property type="match status" value="1"/>
</dbReference>
<dbReference type="PROSITE" id="PS50071">
    <property type="entry name" value="HOMEOBOX_2"/>
    <property type="match status" value="1"/>
</dbReference>
<sequence length="277" mass="29263">MDTNRPGAFVLSSAPLAALHNMAEMKTSLFPYALQGPAGFKAPALGGLGAQLPLGTPHGISDILGRPVGAAGGGLLGGLPRLNGLASSAGVYFGPAAAVARGYPKPLAELPGRPPIFWPGVVQGAPWRDPRLAGPAPAGGVLDKDGKKKHSRPTFSGQQIFALEKTFEQTKYLAGPERARLAYSLGMTESQVKVWFQNRRTKWRKRHAVEMASAKKKQDSDAEKLKVGGSDAEDDDEYNRPLDPNSDDEKITRLLKKHKPSNLALVSPCGGGAGDAL</sequence>
<keyword id="KW-0217">Developmental protein</keyword>
<keyword id="KW-0225">Disease variant</keyword>
<keyword id="KW-0238">DNA-binding</keyword>
<keyword id="KW-0371">Homeobox</keyword>
<keyword id="KW-1026">Leukodystrophy</keyword>
<keyword id="KW-0523">Neurodegeneration</keyword>
<keyword id="KW-0539">Nucleus</keyword>
<keyword id="KW-1267">Proteomics identification</keyword>
<keyword id="KW-1185">Reference proteome</keyword>
<keyword id="KW-0678">Repressor</keyword>
<name>NKX62_HUMAN</name>
<proteinExistence type="evidence at protein level"/>
<feature type="chain" id="PRO_0000300635" description="Homeobox protein Nkx-6.2">
    <location>
        <begin position="1"/>
        <end position="277"/>
    </location>
</feature>
<feature type="DNA-binding region" description="Homeobox" evidence="2">
    <location>
        <begin position="148"/>
        <end position="207"/>
    </location>
</feature>
<feature type="region of interest" description="Repressor domain" evidence="1">
    <location>
        <begin position="89"/>
        <end position="142"/>
    </location>
</feature>
<feature type="region of interest" description="Disordered" evidence="3">
    <location>
        <begin position="132"/>
        <end position="155"/>
    </location>
</feature>
<feature type="region of interest" description="Disordered" evidence="3">
    <location>
        <begin position="210"/>
        <end position="250"/>
    </location>
</feature>
<feature type="compositionally biased region" description="Basic and acidic residues" evidence="3">
    <location>
        <begin position="216"/>
        <end position="226"/>
    </location>
</feature>
<feature type="sequence variant" id="VAR_079480" description="In SPAX8; loss of protein expression." evidence="6">
    <location>
        <begin position="41"/>
        <end position="277"/>
    </location>
</feature>
<feature type="sequence variant" id="VAR_079481" description="In SPAX8; uncertain significance; dbSNP:rs1131692048." evidence="6">
    <original>L</original>
    <variation>V</variation>
    <location>
        <position position="163"/>
    </location>
</feature>
<feature type="sequence variant" id="VAR_034878" description="In dbSNP:rs2804003." evidence="4 5 7">
    <original>V</original>
    <variation>A</variation>
    <location>
        <position position="209"/>
    </location>
</feature>
<organism>
    <name type="scientific">Homo sapiens</name>
    <name type="common">Human</name>
    <dbReference type="NCBI Taxonomy" id="9606"/>
    <lineage>
        <taxon>Eukaryota</taxon>
        <taxon>Metazoa</taxon>
        <taxon>Chordata</taxon>
        <taxon>Craniata</taxon>
        <taxon>Vertebrata</taxon>
        <taxon>Euteleostomi</taxon>
        <taxon>Mammalia</taxon>
        <taxon>Eutheria</taxon>
        <taxon>Euarchontoglires</taxon>
        <taxon>Primates</taxon>
        <taxon>Haplorrhini</taxon>
        <taxon>Catarrhini</taxon>
        <taxon>Hominidae</taxon>
        <taxon>Homo</taxon>
    </lineage>
</organism>
<comment type="function">
    <text evidence="1">Transcription factor with repressor activity involved in the regulation of axon-glial interactions at myelin paranodes in oligodendrocytes. Binds to the consensus DNA sequence 5'-(A/T)TTAATGA-3'. In oligodendrocytes, binds to MBP and PLP1 promoter regions.</text>
</comment>
<comment type="subcellular location">
    <subcellularLocation>
        <location evidence="1">Nucleus</location>
    </subcellularLocation>
</comment>
<comment type="tissue specificity">
    <text evidence="4">Highest expression in brain.</text>
</comment>
<comment type="disease" evidence="6">
    <disease id="DI-05033">
        <name>Spastic ataxia 8, autosomal recessive, with hypomyelinating leukodystrophy</name>
        <acronym>SPAX8</acronym>
        <description>An autosomal recessive neurodegenerative disorder characterized by early-onset hypotonia which progresses to a pyramidal syndrome with ataxia, spasticity, hyperreflexia, weakness and loss of ambulation. Brain imaging shows cerebellar atrophy and hypomyelinating leukodystrophy.</description>
        <dbReference type="MIM" id="617560"/>
    </disease>
    <text>The disease is caused by variants affecting the gene represented in this entry.</text>
</comment>
<accession>Q9C056</accession>
<accession>Q5JSF3</accession>
<protein>
    <recommendedName>
        <fullName>Homeobox protein Nkx-6.2</fullName>
    </recommendedName>
    <alternativeName>
        <fullName>Homeobox protein NK-6 homolog B</fullName>
    </alternativeName>
</protein>
<reference key="1">
    <citation type="journal article" date="2001" name="Mamm. Genome">
        <title>Cloning, expression and chromosomal location of NKX6B to 10q26, a region frequently deleted in brain tumors.</title>
        <authorList>
            <person name="Lee S.-H."/>
            <person name="Davison J.A."/>
            <person name="Vidal S.M."/>
            <person name="Belouchi A."/>
        </authorList>
    </citation>
    <scope>NUCLEOTIDE SEQUENCE [GENOMIC DNA]</scope>
    <scope>VARIANT ALA-209</scope>
    <scope>TISSUE SPECIFICITY</scope>
</reference>
<reference key="2">
    <citation type="journal article" date="2004" name="Nature">
        <title>The DNA sequence and comparative analysis of human chromosome 10.</title>
        <authorList>
            <person name="Deloukas P."/>
            <person name="Earthrowl M.E."/>
            <person name="Grafham D.V."/>
            <person name="Rubenfield M."/>
            <person name="French L."/>
            <person name="Steward C.A."/>
            <person name="Sims S.K."/>
            <person name="Jones M.C."/>
            <person name="Searle S."/>
            <person name="Scott C."/>
            <person name="Howe K."/>
            <person name="Hunt S.E."/>
            <person name="Andrews T.D."/>
            <person name="Gilbert J.G.R."/>
            <person name="Swarbreck D."/>
            <person name="Ashurst J.L."/>
            <person name="Taylor A."/>
            <person name="Battles J."/>
            <person name="Bird C.P."/>
            <person name="Ainscough R."/>
            <person name="Almeida J.P."/>
            <person name="Ashwell R.I.S."/>
            <person name="Ambrose K.D."/>
            <person name="Babbage A.K."/>
            <person name="Bagguley C.L."/>
            <person name="Bailey J."/>
            <person name="Banerjee R."/>
            <person name="Bates K."/>
            <person name="Beasley H."/>
            <person name="Bray-Allen S."/>
            <person name="Brown A.J."/>
            <person name="Brown J.Y."/>
            <person name="Burford D.C."/>
            <person name="Burrill W."/>
            <person name="Burton J."/>
            <person name="Cahill P."/>
            <person name="Camire D."/>
            <person name="Carter N.P."/>
            <person name="Chapman J.C."/>
            <person name="Clark S.Y."/>
            <person name="Clarke G."/>
            <person name="Clee C.M."/>
            <person name="Clegg S."/>
            <person name="Corby N."/>
            <person name="Coulson A."/>
            <person name="Dhami P."/>
            <person name="Dutta I."/>
            <person name="Dunn M."/>
            <person name="Faulkner L."/>
            <person name="Frankish A."/>
            <person name="Frankland J.A."/>
            <person name="Garner P."/>
            <person name="Garnett J."/>
            <person name="Gribble S."/>
            <person name="Griffiths C."/>
            <person name="Grocock R."/>
            <person name="Gustafson E."/>
            <person name="Hammond S."/>
            <person name="Harley J.L."/>
            <person name="Hart E."/>
            <person name="Heath P.D."/>
            <person name="Ho T.P."/>
            <person name="Hopkins B."/>
            <person name="Horne J."/>
            <person name="Howden P.J."/>
            <person name="Huckle E."/>
            <person name="Hynds C."/>
            <person name="Johnson C."/>
            <person name="Johnson D."/>
            <person name="Kana A."/>
            <person name="Kay M."/>
            <person name="Kimberley A.M."/>
            <person name="Kershaw J.K."/>
            <person name="Kokkinaki M."/>
            <person name="Laird G.K."/>
            <person name="Lawlor S."/>
            <person name="Lee H.M."/>
            <person name="Leongamornlert D.A."/>
            <person name="Laird G."/>
            <person name="Lloyd C."/>
            <person name="Lloyd D.M."/>
            <person name="Loveland J."/>
            <person name="Lovell J."/>
            <person name="McLaren S."/>
            <person name="McLay K.E."/>
            <person name="McMurray A."/>
            <person name="Mashreghi-Mohammadi M."/>
            <person name="Matthews L."/>
            <person name="Milne S."/>
            <person name="Nickerson T."/>
            <person name="Nguyen M."/>
            <person name="Overton-Larty E."/>
            <person name="Palmer S.A."/>
            <person name="Pearce A.V."/>
            <person name="Peck A.I."/>
            <person name="Pelan S."/>
            <person name="Phillimore B."/>
            <person name="Porter K."/>
            <person name="Rice C.M."/>
            <person name="Rogosin A."/>
            <person name="Ross M.T."/>
            <person name="Sarafidou T."/>
            <person name="Sehra H.K."/>
            <person name="Shownkeen R."/>
            <person name="Skuce C.D."/>
            <person name="Smith M."/>
            <person name="Standring L."/>
            <person name="Sycamore N."/>
            <person name="Tester J."/>
            <person name="Thorpe A."/>
            <person name="Torcasso W."/>
            <person name="Tracey A."/>
            <person name="Tromans A."/>
            <person name="Tsolas J."/>
            <person name="Wall M."/>
            <person name="Walsh J."/>
            <person name="Wang H."/>
            <person name="Weinstock K."/>
            <person name="West A.P."/>
            <person name="Willey D.L."/>
            <person name="Whitehead S.L."/>
            <person name="Wilming L."/>
            <person name="Wray P.W."/>
            <person name="Young L."/>
            <person name="Chen Y."/>
            <person name="Lovering R.C."/>
            <person name="Moschonas N.K."/>
            <person name="Siebert R."/>
            <person name="Fechtel K."/>
            <person name="Bentley D."/>
            <person name="Durbin R.M."/>
            <person name="Hubbard T."/>
            <person name="Doucette-Stamm L."/>
            <person name="Beck S."/>
            <person name="Smith D.R."/>
            <person name="Rogers J."/>
        </authorList>
    </citation>
    <scope>NUCLEOTIDE SEQUENCE [LARGE SCALE GENOMIC DNA]</scope>
</reference>
<reference key="3">
    <citation type="submission" date="2005-09" db="EMBL/GenBank/DDBJ databases">
        <authorList>
            <person name="Mural R.J."/>
            <person name="Istrail S."/>
            <person name="Sutton G.G."/>
            <person name="Florea L."/>
            <person name="Halpern A.L."/>
            <person name="Mobarry C.M."/>
            <person name="Lippert R."/>
            <person name="Walenz B."/>
            <person name="Shatkay H."/>
            <person name="Dew I."/>
            <person name="Miller J.R."/>
            <person name="Flanigan M.J."/>
            <person name="Edwards N.J."/>
            <person name="Bolanos R."/>
            <person name="Fasulo D."/>
            <person name="Halldorsson B.V."/>
            <person name="Hannenhalli S."/>
            <person name="Turner R."/>
            <person name="Yooseph S."/>
            <person name="Lu F."/>
            <person name="Nusskern D.R."/>
            <person name="Shue B.C."/>
            <person name="Zheng X.H."/>
            <person name="Zhong F."/>
            <person name="Delcher A.L."/>
            <person name="Huson D.H."/>
            <person name="Kravitz S.A."/>
            <person name="Mouchard L."/>
            <person name="Reinert K."/>
            <person name="Remington K.A."/>
            <person name="Clark A.G."/>
            <person name="Waterman M.S."/>
            <person name="Eichler E.E."/>
            <person name="Adams M.D."/>
            <person name="Hunkapiller M.W."/>
            <person name="Myers E.W."/>
            <person name="Venter J.C."/>
        </authorList>
    </citation>
    <scope>NUCLEOTIDE SEQUENCE [LARGE SCALE GENOMIC DNA]</scope>
    <scope>VARIANT ALA-209</scope>
</reference>
<reference key="4">
    <citation type="journal article" date="2004" name="Genome Res.">
        <title>The status, quality, and expansion of the NIH full-length cDNA project: the Mammalian Gene Collection (MGC).</title>
        <authorList>
            <consortium name="The MGC Project Team"/>
        </authorList>
    </citation>
    <scope>NUCLEOTIDE SEQUENCE [LARGE SCALE MRNA]</scope>
    <scope>VARIANT ALA-209</scope>
    <source>
        <tissue>Brain cortex</tissue>
    </source>
</reference>
<reference key="5">
    <citation type="journal article" date="2017" name="Am. J. Hum. Genet.">
        <title>Mutations in NKX6-2 Cause Progressive Spastic Ataxia and Hypomyelination.</title>
        <authorList>
            <consortium name="SYNAPSE Study Group"/>
            <person name="Chelban V."/>
            <person name="Patel N."/>
            <person name="Vandrovcova J."/>
            <person name="Zanetti M.N."/>
            <person name="Lynch D.S."/>
            <person name="Ryten M."/>
            <person name="Botia J.A."/>
            <person name="Bello O."/>
            <person name="Tribollet E."/>
            <person name="Efthymiou S."/>
            <person name="Davagnanam I."/>
            <person name="Bashiri F.A."/>
            <person name="Wood N.W."/>
            <person name="Rothman J.E."/>
            <person name="Alkuraya F.S."/>
            <person name="Houlden H."/>
        </authorList>
    </citation>
    <scope>INVOLVEMENT IN SPAX8</scope>
    <scope>VARIANTS SPAX8 41-LYS--LEU-277 DEL AND VAL-163</scope>
    <scope>CHARACTERIZATION OF VARIANT SPAX8 41-LYS--LEU-277 DEL</scope>
</reference>
<gene>
    <name type="primary">NKX6-2</name>
    <name type="synonym">GTX</name>
    <name type="synonym">NKX6B</name>
</gene>
<evidence type="ECO:0000250" key="1">
    <source>
        <dbReference type="UniProtKB" id="D3Z4R4"/>
    </source>
</evidence>
<evidence type="ECO:0000255" key="2">
    <source>
        <dbReference type="PROSITE-ProRule" id="PRU00108"/>
    </source>
</evidence>
<evidence type="ECO:0000256" key="3">
    <source>
        <dbReference type="SAM" id="MobiDB-lite"/>
    </source>
</evidence>
<evidence type="ECO:0000269" key="4">
    <source>
    </source>
</evidence>
<evidence type="ECO:0000269" key="5">
    <source>
    </source>
</evidence>
<evidence type="ECO:0000269" key="6">
    <source>
    </source>
</evidence>
<evidence type="ECO:0000269" key="7">
    <source ref="3"/>
</evidence>